<proteinExistence type="inferred from homology"/>
<feature type="chain" id="PRO_1000017975" description="Aspartate--ammonia ligase">
    <location>
        <begin position="1"/>
        <end position="330"/>
    </location>
</feature>
<organism>
    <name type="scientific">Yersinia pestis bv. Antiqua (strain Antiqua)</name>
    <dbReference type="NCBI Taxonomy" id="360102"/>
    <lineage>
        <taxon>Bacteria</taxon>
        <taxon>Pseudomonadati</taxon>
        <taxon>Pseudomonadota</taxon>
        <taxon>Gammaproteobacteria</taxon>
        <taxon>Enterobacterales</taxon>
        <taxon>Yersiniaceae</taxon>
        <taxon>Yersinia</taxon>
    </lineage>
</organism>
<sequence length="330" mass="36828">MKKQFIQKQQQISFVKSFFSRQLEQQLGLIEVQAPILSRVGDGTQDNLSGSEKAVQVKVKSLPDSTFEVVHSLAKWKRKTLGRFDFGADQGVYTHMKALRPDEDRLSAIHSVYVDQWDWERVMGDGERNLAYLKSTVNKIYAAIKETEAAISAEFGVKPFLPDHIQFIHSESLRARFPDLDAKGRERAIAKELGAVFLIGIGGKLADGQSHDVRAPDYDDWTSPSAEGFSGLNGDIIVWNPILEDAFEISSMGIRVDAEALKRQLALTGDEDRLELEWHQSLLRGEMPQTIGGGIGQSRLVMLLLQKQHIGQVQCGVWGPEISEKVDGLL</sequence>
<accession>Q1CC50</accession>
<protein>
    <recommendedName>
        <fullName evidence="1">Aspartate--ammonia ligase</fullName>
        <ecNumber evidence="1">6.3.1.1</ecNumber>
    </recommendedName>
    <alternativeName>
        <fullName evidence="1">Asparagine synthetase A</fullName>
    </alternativeName>
</protein>
<comment type="catalytic activity">
    <reaction evidence="1">
        <text>L-aspartate + NH4(+) + ATP = L-asparagine + AMP + diphosphate + H(+)</text>
        <dbReference type="Rhea" id="RHEA:11372"/>
        <dbReference type="ChEBI" id="CHEBI:15378"/>
        <dbReference type="ChEBI" id="CHEBI:28938"/>
        <dbReference type="ChEBI" id="CHEBI:29991"/>
        <dbReference type="ChEBI" id="CHEBI:30616"/>
        <dbReference type="ChEBI" id="CHEBI:33019"/>
        <dbReference type="ChEBI" id="CHEBI:58048"/>
        <dbReference type="ChEBI" id="CHEBI:456215"/>
        <dbReference type="EC" id="6.3.1.1"/>
    </reaction>
</comment>
<comment type="pathway">
    <text evidence="1">Amino-acid biosynthesis; L-asparagine biosynthesis; L-asparagine from L-aspartate (ammonia route): step 1/1.</text>
</comment>
<comment type="subcellular location">
    <subcellularLocation>
        <location evidence="1">Cytoplasm</location>
    </subcellularLocation>
</comment>
<comment type="similarity">
    <text evidence="1">Belongs to the class-II aminoacyl-tRNA synthetase family. AsnA subfamily.</text>
</comment>
<gene>
    <name evidence="1" type="primary">asnA</name>
    <name type="ordered locus">YPA_0003</name>
</gene>
<evidence type="ECO:0000255" key="1">
    <source>
        <dbReference type="HAMAP-Rule" id="MF_00555"/>
    </source>
</evidence>
<keyword id="KW-0028">Amino-acid biosynthesis</keyword>
<keyword id="KW-0061">Asparagine biosynthesis</keyword>
<keyword id="KW-0067">ATP-binding</keyword>
<keyword id="KW-0963">Cytoplasm</keyword>
<keyword id="KW-0436">Ligase</keyword>
<keyword id="KW-0547">Nucleotide-binding</keyword>
<name>ASNA_YERPA</name>
<dbReference type="EC" id="6.3.1.1" evidence="1"/>
<dbReference type="EMBL" id="CP000308">
    <property type="protein sequence ID" value="ABG11972.1"/>
    <property type="molecule type" value="Genomic_DNA"/>
</dbReference>
<dbReference type="RefSeq" id="WP_002212256.1">
    <property type="nucleotide sequence ID" value="NZ_CP009906.1"/>
</dbReference>
<dbReference type="SMR" id="Q1CC50"/>
<dbReference type="GeneID" id="57974591"/>
<dbReference type="KEGG" id="ypa:YPA_0003"/>
<dbReference type="UniPathway" id="UPA00134">
    <property type="reaction ID" value="UER00194"/>
</dbReference>
<dbReference type="Proteomes" id="UP000001971">
    <property type="component" value="Chromosome"/>
</dbReference>
<dbReference type="GO" id="GO:0005829">
    <property type="term" value="C:cytosol"/>
    <property type="evidence" value="ECO:0007669"/>
    <property type="project" value="TreeGrafter"/>
</dbReference>
<dbReference type="GO" id="GO:0004071">
    <property type="term" value="F:aspartate-ammonia ligase activity"/>
    <property type="evidence" value="ECO:0007669"/>
    <property type="project" value="UniProtKB-UniRule"/>
</dbReference>
<dbReference type="GO" id="GO:0005524">
    <property type="term" value="F:ATP binding"/>
    <property type="evidence" value="ECO:0007669"/>
    <property type="project" value="UniProtKB-UniRule"/>
</dbReference>
<dbReference type="GO" id="GO:0070981">
    <property type="term" value="P:L-asparagine biosynthetic process"/>
    <property type="evidence" value="ECO:0007669"/>
    <property type="project" value="UniProtKB-UniRule"/>
</dbReference>
<dbReference type="Gene3D" id="3.30.930.10">
    <property type="entry name" value="Bira Bifunctional Protein, Domain 2"/>
    <property type="match status" value="1"/>
</dbReference>
<dbReference type="HAMAP" id="MF_00555">
    <property type="entry name" value="AsnA"/>
    <property type="match status" value="1"/>
</dbReference>
<dbReference type="InterPro" id="IPR006195">
    <property type="entry name" value="aa-tRNA-synth_II"/>
</dbReference>
<dbReference type="InterPro" id="IPR045864">
    <property type="entry name" value="aa-tRNA-synth_II/BPL/LPL"/>
</dbReference>
<dbReference type="InterPro" id="IPR004618">
    <property type="entry name" value="AsnA"/>
</dbReference>
<dbReference type="NCBIfam" id="TIGR00669">
    <property type="entry name" value="asnA"/>
    <property type="match status" value="1"/>
</dbReference>
<dbReference type="PANTHER" id="PTHR30073">
    <property type="entry name" value="ASPARTATE--AMMONIA LIGASE"/>
    <property type="match status" value="1"/>
</dbReference>
<dbReference type="PANTHER" id="PTHR30073:SF5">
    <property type="entry name" value="ASPARTATE--AMMONIA LIGASE"/>
    <property type="match status" value="1"/>
</dbReference>
<dbReference type="Pfam" id="PF03590">
    <property type="entry name" value="AsnA"/>
    <property type="match status" value="1"/>
</dbReference>
<dbReference type="PIRSF" id="PIRSF001555">
    <property type="entry name" value="Asp_ammon_ligase"/>
    <property type="match status" value="1"/>
</dbReference>
<dbReference type="SUPFAM" id="SSF55681">
    <property type="entry name" value="Class II aaRS and biotin synthetases"/>
    <property type="match status" value="1"/>
</dbReference>
<dbReference type="PROSITE" id="PS50862">
    <property type="entry name" value="AA_TRNA_LIGASE_II"/>
    <property type="match status" value="1"/>
</dbReference>
<reference key="1">
    <citation type="journal article" date="2006" name="J. Bacteriol.">
        <title>Complete genome sequence of Yersinia pestis strains Antiqua and Nepal516: evidence of gene reduction in an emerging pathogen.</title>
        <authorList>
            <person name="Chain P.S.G."/>
            <person name="Hu P."/>
            <person name="Malfatti S.A."/>
            <person name="Radnedge L."/>
            <person name="Larimer F."/>
            <person name="Vergez L.M."/>
            <person name="Worsham P."/>
            <person name="Chu M.C."/>
            <person name="Andersen G.L."/>
        </authorList>
    </citation>
    <scope>NUCLEOTIDE SEQUENCE [LARGE SCALE GENOMIC DNA]</scope>
    <source>
        <strain>Antiqua</strain>
    </source>
</reference>